<gene>
    <name evidence="1" type="primary">rpsT</name>
    <name evidence="1" type="synonym">rps20</name>
    <name type="ordered locus">SPy_1234</name>
    <name type="ordered locus">M5005_Spy0946</name>
</gene>
<feature type="chain" id="PRO_0000168037" description="Small ribosomal subunit protein bS20">
    <location>
        <begin position="1"/>
        <end position="77"/>
    </location>
</feature>
<feature type="region of interest" description="Disordered" evidence="2">
    <location>
        <begin position="47"/>
        <end position="77"/>
    </location>
</feature>
<reference key="1">
    <citation type="journal article" date="2001" name="Proc. Natl. Acad. Sci. U.S.A.">
        <title>Complete genome sequence of an M1 strain of Streptococcus pyogenes.</title>
        <authorList>
            <person name="Ferretti J.J."/>
            <person name="McShan W.M."/>
            <person name="Ajdic D.J."/>
            <person name="Savic D.J."/>
            <person name="Savic G."/>
            <person name="Lyon K."/>
            <person name="Primeaux C."/>
            <person name="Sezate S."/>
            <person name="Suvorov A.N."/>
            <person name="Kenton S."/>
            <person name="Lai H.S."/>
            <person name="Lin S.P."/>
            <person name="Qian Y."/>
            <person name="Jia H.G."/>
            <person name="Najar F.Z."/>
            <person name="Ren Q."/>
            <person name="Zhu H."/>
            <person name="Song L."/>
            <person name="White J."/>
            <person name="Yuan X."/>
            <person name="Clifton S.W."/>
            <person name="Roe B.A."/>
            <person name="McLaughlin R.E."/>
        </authorList>
    </citation>
    <scope>NUCLEOTIDE SEQUENCE [LARGE SCALE GENOMIC DNA]</scope>
    <source>
        <strain>ATCC 700294 / SF370 / Serotype M1</strain>
    </source>
</reference>
<reference key="2">
    <citation type="journal article" date="2005" name="J. Infect. Dis.">
        <title>Evolutionary origin and emergence of a highly successful clone of serotype M1 group A Streptococcus involved multiple horizontal gene transfer events.</title>
        <authorList>
            <person name="Sumby P."/>
            <person name="Porcella S.F."/>
            <person name="Madrigal A.G."/>
            <person name="Barbian K.D."/>
            <person name="Virtaneva K."/>
            <person name="Ricklefs S.M."/>
            <person name="Sturdevant D.E."/>
            <person name="Graham M.R."/>
            <person name="Vuopio-Varkila J."/>
            <person name="Hoe N.P."/>
            <person name="Musser J.M."/>
        </authorList>
    </citation>
    <scope>NUCLEOTIDE SEQUENCE [LARGE SCALE GENOMIC DNA]</scope>
    <source>
        <strain>ATCC BAA-947 / MGAS5005 / Serotype M1</strain>
    </source>
</reference>
<proteinExistence type="inferred from homology"/>
<keyword id="KW-1185">Reference proteome</keyword>
<keyword id="KW-0687">Ribonucleoprotein</keyword>
<keyword id="KW-0689">Ribosomal protein</keyword>
<keyword id="KW-0694">RNA-binding</keyword>
<keyword id="KW-0699">rRNA-binding</keyword>
<organism>
    <name type="scientific">Streptococcus pyogenes serotype M1</name>
    <dbReference type="NCBI Taxonomy" id="301447"/>
    <lineage>
        <taxon>Bacteria</taxon>
        <taxon>Bacillati</taxon>
        <taxon>Bacillota</taxon>
        <taxon>Bacilli</taxon>
        <taxon>Lactobacillales</taxon>
        <taxon>Streptococcaceae</taxon>
        <taxon>Streptococcus</taxon>
    </lineage>
</organism>
<name>RS20_STRP1</name>
<evidence type="ECO:0000255" key="1">
    <source>
        <dbReference type="HAMAP-Rule" id="MF_00500"/>
    </source>
</evidence>
<evidence type="ECO:0000256" key="2">
    <source>
        <dbReference type="SAM" id="MobiDB-lite"/>
    </source>
</evidence>
<evidence type="ECO:0000305" key="3"/>
<accession>P66509</accession>
<accession>Q48YK8</accession>
<accession>Q99ZH0</accession>
<dbReference type="EMBL" id="AE004092">
    <property type="protein sequence ID" value="AAK34091.1"/>
    <property type="molecule type" value="Genomic_DNA"/>
</dbReference>
<dbReference type="EMBL" id="CP000017">
    <property type="protein sequence ID" value="AAZ51564.1"/>
    <property type="molecule type" value="Genomic_DNA"/>
</dbReference>
<dbReference type="RefSeq" id="NP_269370.1">
    <property type="nucleotide sequence ID" value="NC_002737.2"/>
</dbReference>
<dbReference type="SMR" id="P66509"/>
<dbReference type="PaxDb" id="1314-HKU360_00991"/>
<dbReference type="KEGG" id="spy:SPy_1234"/>
<dbReference type="KEGG" id="spz:M5005_Spy0946"/>
<dbReference type="PATRIC" id="fig|160490.10.peg.1078"/>
<dbReference type="HOGENOM" id="CLU_160655_1_1_9"/>
<dbReference type="OMA" id="GVIHKNA"/>
<dbReference type="PRO" id="PR:P66509"/>
<dbReference type="Proteomes" id="UP000000750">
    <property type="component" value="Chromosome"/>
</dbReference>
<dbReference type="GO" id="GO:0005829">
    <property type="term" value="C:cytosol"/>
    <property type="evidence" value="ECO:0007669"/>
    <property type="project" value="TreeGrafter"/>
</dbReference>
<dbReference type="GO" id="GO:0015935">
    <property type="term" value="C:small ribosomal subunit"/>
    <property type="evidence" value="ECO:0007669"/>
    <property type="project" value="TreeGrafter"/>
</dbReference>
<dbReference type="GO" id="GO:0070181">
    <property type="term" value="F:small ribosomal subunit rRNA binding"/>
    <property type="evidence" value="ECO:0007669"/>
    <property type="project" value="TreeGrafter"/>
</dbReference>
<dbReference type="GO" id="GO:0003735">
    <property type="term" value="F:structural constituent of ribosome"/>
    <property type="evidence" value="ECO:0007669"/>
    <property type="project" value="InterPro"/>
</dbReference>
<dbReference type="GO" id="GO:0006412">
    <property type="term" value="P:translation"/>
    <property type="evidence" value="ECO:0007669"/>
    <property type="project" value="UniProtKB-UniRule"/>
</dbReference>
<dbReference type="FunFam" id="1.20.58.110:FF:000001">
    <property type="entry name" value="30S ribosomal protein S20"/>
    <property type="match status" value="1"/>
</dbReference>
<dbReference type="Gene3D" id="1.20.58.110">
    <property type="entry name" value="Ribosomal protein S20"/>
    <property type="match status" value="1"/>
</dbReference>
<dbReference type="HAMAP" id="MF_00500">
    <property type="entry name" value="Ribosomal_bS20"/>
    <property type="match status" value="1"/>
</dbReference>
<dbReference type="InterPro" id="IPR002583">
    <property type="entry name" value="Ribosomal_bS20"/>
</dbReference>
<dbReference type="InterPro" id="IPR036510">
    <property type="entry name" value="Ribosomal_bS20_sf"/>
</dbReference>
<dbReference type="NCBIfam" id="TIGR00029">
    <property type="entry name" value="S20"/>
    <property type="match status" value="1"/>
</dbReference>
<dbReference type="PANTHER" id="PTHR33398">
    <property type="entry name" value="30S RIBOSOMAL PROTEIN S20"/>
    <property type="match status" value="1"/>
</dbReference>
<dbReference type="PANTHER" id="PTHR33398:SF1">
    <property type="entry name" value="SMALL RIBOSOMAL SUBUNIT PROTEIN BS20C"/>
    <property type="match status" value="1"/>
</dbReference>
<dbReference type="Pfam" id="PF01649">
    <property type="entry name" value="Ribosomal_S20p"/>
    <property type="match status" value="1"/>
</dbReference>
<dbReference type="SUPFAM" id="SSF46992">
    <property type="entry name" value="Ribosomal protein S20"/>
    <property type="match status" value="1"/>
</dbReference>
<protein>
    <recommendedName>
        <fullName evidence="1">Small ribosomal subunit protein bS20</fullName>
    </recommendedName>
    <alternativeName>
        <fullName evidence="3">30S ribosomal protein S20</fullName>
    </alternativeName>
</protein>
<sequence>MANIKSAIKRAELNVKANEKNSAQKSAMRTAIKAFEANPSEELFRAASSSIDKAESKGLIHKNKASRDKARLAAKLG</sequence>
<comment type="function">
    <text evidence="1">Binds directly to 16S ribosomal RNA.</text>
</comment>
<comment type="similarity">
    <text evidence="1">Belongs to the bacterial ribosomal protein bS20 family.</text>
</comment>